<gene>
    <name type="primary">tubgcp3</name>
</gene>
<sequence length="906" mass="103653">MAVPDQKSPNVLLQNLCCRILGKGEADVAQQFQYAVRVIGSNFAPTVERDEFLVTEKIKKEFVRQRREADGALFSELHRKLQSQGVLKNRWSILYLLLSLSEDPRKQPNKTSSFAALFAQALPRDAHSTPYYYARPQSLPLSYQDRNVQCAQNAASIGSSGISSIGMYALNGPTPQSIIQGQSNQTPNMGDALRQQLGSRLAWTLAAGQQPSQQSTTTKGLPNTVSRNVPRTRREGDSSGSVEITETSLVRDLLYVFQGIDGKFVKMCNSENCYKVDGKVAVSKSLKDITSKLSELGWLHNKIKKYTDQRSLDRAFGLVGQSFCAALHQELKEYYRLLSVLHSQLQVEDDQGVNLGVESSLTLRRLLVWTFDPKIRLKTLAALVDHCQGRKGGELASAVHAYTKTGDPYMRSLVQHILGLVAYPILNFLYRWIYDGELEDTYHEFFVASDPVVKTDRLWHDKYSLRKSMIPSFMTMDQSRKVLLIGKSINFLHQVCHDQTPASKAMAVGKSAESPKDAAELFTDLENAFQTKIDAAYFDTSKYLLDVLNKNYNLLEHMQAMRRYLLLGQGDFIRHLMDLLKPELVRPATTLYQHNLTGILETAVRATNAQFDNPEILKRLDVRLLEVSPGDTGWDVFSLDYHVDGPIATVFTRECMSHYLRVFNFLWRAKRMEYILTDIWKGHMCNAKLLKGMPELSGVLHQCHILASEMVHFIHQMQYYITFEVLECSWDELWNKVLKAQDLDHIIAAHDVFLDTIISRCLLDSESRALLNQLRAVFDQIIEFQNAQDALYRAALEELQQRLQFEERKKERESEGEWGVTAAEEDVENKRIQEFQESIPKMRSQLRILTHFYQGIVQQFLVLLTTSTDESLRFLSFRLDFNEHYKAREPRLRVSMGTRGRRSFHV</sequence>
<feature type="chain" id="PRO_0000078120" description="Gamma-tubulin complex component 3 homolog">
    <location>
        <begin position="1"/>
        <end position="906"/>
    </location>
</feature>
<feature type="region of interest" description="Disordered" evidence="1">
    <location>
        <begin position="208"/>
        <end position="242"/>
    </location>
</feature>
<feature type="compositionally biased region" description="Polar residues" evidence="1">
    <location>
        <begin position="208"/>
        <end position="229"/>
    </location>
</feature>
<name>GCP3_XENLA</name>
<dbReference type="EMBL" id="AF052663">
    <property type="protein sequence ID" value="AAC06304.1"/>
    <property type="molecule type" value="mRNA"/>
</dbReference>
<dbReference type="PDB" id="6TF9">
    <property type="method" value="EM"/>
    <property type="resolution" value="4.80 A"/>
    <property type="chains" value="QP1/cP1/dP1/eP1/fP1=1-906"/>
</dbReference>
<dbReference type="PDB" id="9EOJ">
    <property type="method" value="EM"/>
    <property type="resolution" value="17.00 A"/>
    <property type="chains" value="Q/c/d/e/f=1-906"/>
</dbReference>
<dbReference type="PDBsum" id="6TF9"/>
<dbReference type="PDBsum" id="9EOJ"/>
<dbReference type="EMDB" id="EMD-10491"/>
<dbReference type="EMDB" id="EMD-19861"/>
<dbReference type="SMR" id="O73787"/>
<dbReference type="AGR" id="Xenbase:XB-GENE-866019"/>
<dbReference type="Xenbase" id="XB-GENE-866019">
    <property type="gene designation" value="tubgcp3.S"/>
</dbReference>
<dbReference type="Proteomes" id="UP000186698">
    <property type="component" value="Unplaced"/>
</dbReference>
<dbReference type="GO" id="GO:0005813">
    <property type="term" value="C:centrosome"/>
    <property type="evidence" value="ECO:0007669"/>
    <property type="project" value="UniProtKB-SubCell"/>
</dbReference>
<dbReference type="GO" id="GO:0005737">
    <property type="term" value="C:cytoplasm"/>
    <property type="evidence" value="ECO:0007669"/>
    <property type="project" value="UniProtKB-KW"/>
</dbReference>
<dbReference type="GO" id="GO:0000930">
    <property type="term" value="C:gamma-tubulin complex"/>
    <property type="evidence" value="ECO:0000318"/>
    <property type="project" value="GO_Central"/>
</dbReference>
<dbReference type="GO" id="GO:0005874">
    <property type="term" value="C:microtubule"/>
    <property type="evidence" value="ECO:0007669"/>
    <property type="project" value="UniProtKB-KW"/>
</dbReference>
<dbReference type="GO" id="GO:0000922">
    <property type="term" value="C:spindle pole"/>
    <property type="evidence" value="ECO:0007669"/>
    <property type="project" value="InterPro"/>
</dbReference>
<dbReference type="GO" id="GO:0043015">
    <property type="term" value="F:gamma-tubulin binding"/>
    <property type="evidence" value="ECO:0000318"/>
    <property type="project" value="GO_Central"/>
</dbReference>
<dbReference type="GO" id="GO:0051011">
    <property type="term" value="F:microtubule minus-end binding"/>
    <property type="evidence" value="ECO:0007669"/>
    <property type="project" value="TreeGrafter"/>
</dbReference>
<dbReference type="GO" id="GO:0031122">
    <property type="term" value="P:cytoplasmic microtubule organization"/>
    <property type="evidence" value="ECO:0000318"/>
    <property type="project" value="GO_Central"/>
</dbReference>
<dbReference type="GO" id="GO:0051321">
    <property type="term" value="P:meiotic cell cycle"/>
    <property type="evidence" value="ECO:0000318"/>
    <property type="project" value="GO_Central"/>
</dbReference>
<dbReference type="GO" id="GO:0007020">
    <property type="term" value="P:microtubule nucleation"/>
    <property type="evidence" value="ECO:0000318"/>
    <property type="project" value="GO_Central"/>
</dbReference>
<dbReference type="GO" id="GO:0000278">
    <property type="term" value="P:mitotic cell cycle"/>
    <property type="evidence" value="ECO:0000318"/>
    <property type="project" value="GO_Central"/>
</dbReference>
<dbReference type="GO" id="GO:0051225">
    <property type="term" value="P:spindle assembly"/>
    <property type="evidence" value="ECO:0000318"/>
    <property type="project" value="GO_Central"/>
</dbReference>
<dbReference type="Gene3D" id="1.20.120.1900">
    <property type="entry name" value="Gamma-tubulin complex, C-terminal domain"/>
    <property type="match status" value="1"/>
</dbReference>
<dbReference type="InterPro" id="IPR007259">
    <property type="entry name" value="GCP"/>
</dbReference>
<dbReference type="InterPro" id="IPR040457">
    <property type="entry name" value="GCP_C"/>
</dbReference>
<dbReference type="InterPro" id="IPR042241">
    <property type="entry name" value="GCP_C_sf"/>
</dbReference>
<dbReference type="InterPro" id="IPR041470">
    <property type="entry name" value="GCP_N"/>
</dbReference>
<dbReference type="PANTHER" id="PTHR19302">
    <property type="entry name" value="GAMMA TUBULIN COMPLEX PROTEIN"/>
    <property type="match status" value="1"/>
</dbReference>
<dbReference type="PANTHER" id="PTHR19302:SF14">
    <property type="entry name" value="GAMMA-TUBULIN COMPLEX COMPONENT 3"/>
    <property type="match status" value="1"/>
</dbReference>
<dbReference type="Pfam" id="PF04130">
    <property type="entry name" value="GCP_C_terminal"/>
    <property type="match status" value="1"/>
</dbReference>
<dbReference type="Pfam" id="PF17681">
    <property type="entry name" value="GCP_N_terminal"/>
    <property type="match status" value="1"/>
</dbReference>
<organism>
    <name type="scientific">Xenopus laevis</name>
    <name type="common">African clawed frog</name>
    <dbReference type="NCBI Taxonomy" id="8355"/>
    <lineage>
        <taxon>Eukaryota</taxon>
        <taxon>Metazoa</taxon>
        <taxon>Chordata</taxon>
        <taxon>Craniata</taxon>
        <taxon>Vertebrata</taxon>
        <taxon>Euteleostomi</taxon>
        <taxon>Amphibia</taxon>
        <taxon>Batrachia</taxon>
        <taxon>Anura</taxon>
        <taxon>Pipoidea</taxon>
        <taxon>Pipidae</taxon>
        <taxon>Xenopodinae</taxon>
        <taxon>Xenopus</taxon>
        <taxon>Xenopus</taxon>
    </lineage>
</organism>
<protein>
    <recommendedName>
        <fullName>Gamma-tubulin complex component 3 homolog</fullName>
    </recommendedName>
    <alternativeName>
        <fullName>Gamma-ring complex protein 109</fullName>
    </alternativeName>
    <alternativeName>
        <fullName>Xgrip109</fullName>
        <shortName>x109p</shortName>
    </alternativeName>
</protein>
<reference key="1">
    <citation type="journal article" date="1998" name="J. Cell Biol.">
        <title>Xgrip109: a gamma tubulin-associated protein with an essential role in gamma tubulin ring complex (gammaTuRC) assembly and centrosome function.</title>
        <authorList>
            <person name="Martin O.C."/>
            <person name="Gunawardane R.N."/>
            <person name="Iwamatsu A."/>
            <person name="Zheng Y."/>
        </authorList>
    </citation>
    <scope>NUCLEOTIDE SEQUENCE [MRNA]</scope>
    <scope>PARTIAL PROTEIN SEQUENCE</scope>
    <source>
        <tissue>Oocyte</tissue>
    </source>
</reference>
<proteinExistence type="evidence at protein level"/>
<comment type="function">
    <text>Necessary for the recruitment of gamma-tubulin to the centrosome and for the formation of a functional centrosome.</text>
</comment>
<comment type="subunit">
    <text>Interacts with gamma-tubulin.</text>
</comment>
<comment type="subcellular location">
    <subcellularLocation>
        <location>Cytoplasm</location>
        <location>Cytoskeleton</location>
        <location>Microtubule organizing center</location>
        <location>Centrosome</location>
    </subcellularLocation>
</comment>
<comment type="similarity">
    <text evidence="2">Belongs to the TUBGCP family.</text>
</comment>
<evidence type="ECO:0000256" key="1">
    <source>
        <dbReference type="SAM" id="MobiDB-lite"/>
    </source>
</evidence>
<evidence type="ECO:0000305" key="2"/>
<accession>O73787</accession>
<keyword id="KW-0002">3D-structure</keyword>
<keyword id="KW-0963">Cytoplasm</keyword>
<keyword id="KW-0206">Cytoskeleton</keyword>
<keyword id="KW-0903">Direct protein sequencing</keyword>
<keyword id="KW-0493">Microtubule</keyword>
<keyword id="KW-1185">Reference proteome</keyword>